<keyword id="KW-0342">GTP-binding</keyword>
<keyword id="KW-0547">Nucleotide-binding</keyword>
<keyword id="KW-0677">Repeat</keyword>
<keyword id="KW-0690">Ribosome biogenesis</keyword>
<proteinExistence type="inferred from homology"/>
<dbReference type="EMBL" id="CP000681">
    <property type="protein sequence ID" value="ABP76369.1"/>
    <property type="molecule type" value="Genomic_DNA"/>
</dbReference>
<dbReference type="SMR" id="A4Y8T6"/>
<dbReference type="STRING" id="319224.Sputcn32_2648"/>
<dbReference type="KEGG" id="spc:Sputcn32_2648"/>
<dbReference type="eggNOG" id="COG1160">
    <property type="taxonomic scope" value="Bacteria"/>
</dbReference>
<dbReference type="HOGENOM" id="CLU_016077_6_2_6"/>
<dbReference type="GO" id="GO:0005525">
    <property type="term" value="F:GTP binding"/>
    <property type="evidence" value="ECO:0007669"/>
    <property type="project" value="UniProtKB-UniRule"/>
</dbReference>
<dbReference type="GO" id="GO:0043022">
    <property type="term" value="F:ribosome binding"/>
    <property type="evidence" value="ECO:0007669"/>
    <property type="project" value="TreeGrafter"/>
</dbReference>
<dbReference type="GO" id="GO:0042254">
    <property type="term" value="P:ribosome biogenesis"/>
    <property type="evidence" value="ECO:0007669"/>
    <property type="project" value="UniProtKB-KW"/>
</dbReference>
<dbReference type="CDD" id="cd01894">
    <property type="entry name" value="EngA1"/>
    <property type="match status" value="1"/>
</dbReference>
<dbReference type="CDD" id="cd01895">
    <property type="entry name" value="EngA2"/>
    <property type="match status" value="1"/>
</dbReference>
<dbReference type="FunFam" id="3.30.300.20:FF:000004">
    <property type="entry name" value="GTPase Der"/>
    <property type="match status" value="1"/>
</dbReference>
<dbReference type="FunFam" id="3.40.50.300:FF:000040">
    <property type="entry name" value="GTPase Der"/>
    <property type="match status" value="1"/>
</dbReference>
<dbReference type="FunFam" id="3.40.50.300:FF:000057">
    <property type="entry name" value="GTPase Der"/>
    <property type="match status" value="1"/>
</dbReference>
<dbReference type="Gene3D" id="3.30.300.20">
    <property type="match status" value="1"/>
</dbReference>
<dbReference type="Gene3D" id="3.40.50.300">
    <property type="entry name" value="P-loop containing nucleotide triphosphate hydrolases"/>
    <property type="match status" value="2"/>
</dbReference>
<dbReference type="HAMAP" id="MF_00195">
    <property type="entry name" value="GTPase_Der"/>
    <property type="match status" value="1"/>
</dbReference>
<dbReference type="InterPro" id="IPR031166">
    <property type="entry name" value="G_ENGA"/>
</dbReference>
<dbReference type="InterPro" id="IPR006073">
    <property type="entry name" value="GTP-bd"/>
</dbReference>
<dbReference type="InterPro" id="IPR016484">
    <property type="entry name" value="GTPase_Der"/>
</dbReference>
<dbReference type="InterPro" id="IPR032859">
    <property type="entry name" value="KH_dom-like"/>
</dbReference>
<dbReference type="InterPro" id="IPR015946">
    <property type="entry name" value="KH_dom-like_a/b"/>
</dbReference>
<dbReference type="InterPro" id="IPR027417">
    <property type="entry name" value="P-loop_NTPase"/>
</dbReference>
<dbReference type="InterPro" id="IPR005225">
    <property type="entry name" value="Small_GTP-bd"/>
</dbReference>
<dbReference type="NCBIfam" id="TIGR03594">
    <property type="entry name" value="GTPase_EngA"/>
    <property type="match status" value="1"/>
</dbReference>
<dbReference type="NCBIfam" id="TIGR00231">
    <property type="entry name" value="small_GTP"/>
    <property type="match status" value="2"/>
</dbReference>
<dbReference type="PANTHER" id="PTHR43834">
    <property type="entry name" value="GTPASE DER"/>
    <property type="match status" value="1"/>
</dbReference>
<dbReference type="PANTHER" id="PTHR43834:SF6">
    <property type="entry name" value="GTPASE DER"/>
    <property type="match status" value="1"/>
</dbReference>
<dbReference type="Pfam" id="PF14714">
    <property type="entry name" value="KH_dom-like"/>
    <property type="match status" value="1"/>
</dbReference>
<dbReference type="Pfam" id="PF01926">
    <property type="entry name" value="MMR_HSR1"/>
    <property type="match status" value="2"/>
</dbReference>
<dbReference type="PIRSF" id="PIRSF006485">
    <property type="entry name" value="GTP-binding_EngA"/>
    <property type="match status" value="1"/>
</dbReference>
<dbReference type="PRINTS" id="PR00326">
    <property type="entry name" value="GTP1OBG"/>
</dbReference>
<dbReference type="SUPFAM" id="SSF52540">
    <property type="entry name" value="P-loop containing nucleoside triphosphate hydrolases"/>
    <property type="match status" value="2"/>
</dbReference>
<dbReference type="PROSITE" id="PS51712">
    <property type="entry name" value="G_ENGA"/>
    <property type="match status" value="2"/>
</dbReference>
<feature type="chain" id="PRO_1000011737" description="GTPase Der">
    <location>
        <begin position="1"/>
        <end position="488"/>
    </location>
</feature>
<feature type="domain" description="EngA-type G 1">
    <location>
        <begin position="3"/>
        <end position="166"/>
    </location>
</feature>
<feature type="domain" description="EngA-type G 2">
    <location>
        <begin position="199"/>
        <end position="372"/>
    </location>
</feature>
<feature type="domain" description="KH-like" evidence="1">
    <location>
        <begin position="373"/>
        <end position="457"/>
    </location>
</feature>
<feature type="region of interest" description="Disordered" evidence="2">
    <location>
        <begin position="469"/>
        <end position="488"/>
    </location>
</feature>
<feature type="compositionally biased region" description="Basic residues" evidence="2">
    <location>
        <begin position="473"/>
        <end position="488"/>
    </location>
</feature>
<feature type="binding site" evidence="1">
    <location>
        <begin position="9"/>
        <end position="16"/>
    </location>
    <ligand>
        <name>GTP</name>
        <dbReference type="ChEBI" id="CHEBI:37565"/>
        <label>1</label>
    </ligand>
</feature>
<feature type="binding site" evidence="1">
    <location>
        <begin position="56"/>
        <end position="60"/>
    </location>
    <ligand>
        <name>GTP</name>
        <dbReference type="ChEBI" id="CHEBI:37565"/>
        <label>1</label>
    </ligand>
</feature>
<feature type="binding site" evidence="1">
    <location>
        <begin position="118"/>
        <end position="121"/>
    </location>
    <ligand>
        <name>GTP</name>
        <dbReference type="ChEBI" id="CHEBI:37565"/>
        <label>1</label>
    </ligand>
</feature>
<feature type="binding site" evidence="1">
    <location>
        <begin position="205"/>
        <end position="212"/>
    </location>
    <ligand>
        <name>GTP</name>
        <dbReference type="ChEBI" id="CHEBI:37565"/>
        <label>2</label>
    </ligand>
</feature>
<feature type="binding site" evidence="1">
    <location>
        <begin position="252"/>
        <end position="256"/>
    </location>
    <ligand>
        <name>GTP</name>
        <dbReference type="ChEBI" id="CHEBI:37565"/>
        <label>2</label>
    </ligand>
</feature>
<feature type="binding site" evidence="1">
    <location>
        <begin position="317"/>
        <end position="320"/>
    </location>
    <ligand>
        <name>GTP</name>
        <dbReference type="ChEBI" id="CHEBI:37565"/>
        <label>2</label>
    </ligand>
</feature>
<comment type="function">
    <text evidence="1">GTPase that plays an essential role in the late steps of ribosome biogenesis.</text>
</comment>
<comment type="subunit">
    <text evidence="1">Associates with the 50S ribosomal subunit.</text>
</comment>
<comment type="similarity">
    <text evidence="1">Belongs to the TRAFAC class TrmE-Era-EngA-EngB-Septin-like GTPase superfamily. EngA (Der) GTPase family.</text>
</comment>
<protein>
    <recommendedName>
        <fullName evidence="1">GTPase Der</fullName>
    </recommendedName>
    <alternativeName>
        <fullName evidence="1">GTP-binding protein EngA</fullName>
    </alternativeName>
</protein>
<name>DER_SHEPC</name>
<sequence>MIPVVALVGRPNVGKSTLFNRLTRTRDALVADFPGLTRDRKYGRAFLSGYEFIVVDTGGIDGTEEGIETKMAEQSLAAIEEADVVLFMTDARAGLTAADLSIAQHLRSREKTTFVVANKVDGIDADSACAEFWSLGLGEVYQMAASQGRGVTNMIEYALTPYAEAMGIERQGEEEVVDERQYTEEEAEAEQKRLQDLPIKLAIIGKPNVGKSTLTNRILGEERVVVYDEPGTTRDSIYIPMEREGREYVIIDTAGVRRRSKVHQVIEKFSVIKTLKAVEDANVVLLIIDAREGVAEQDLGLLGFALNAGRALVIAVNKWDGIDQGIKDRVKSELDRRLGFIDFARIHFISALHGTGVGHLFESIEEAYDSATRRVSTSMLTRIMQMSQDDHQPPLVNGRRVKLKYAHAGGYNPPIVVIHGNQVSRLPDSYKRYMMNYFRRSLKVVGTPIQLRFQEGDNPFENKTEKLTMSQERRRKRALSHIKDRKTK</sequence>
<accession>A4Y8T6</accession>
<gene>
    <name evidence="1" type="primary">der</name>
    <name type="synonym">engA</name>
    <name type="ordered locus">Sputcn32_2648</name>
</gene>
<reference key="1">
    <citation type="submission" date="2007-04" db="EMBL/GenBank/DDBJ databases">
        <title>Complete sequence of Shewanella putrefaciens CN-32.</title>
        <authorList>
            <consortium name="US DOE Joint Genome Institute"/>
            <person name="Copeland A."/>
            <person name="Lucas S."/>
            <person name="Lapidus A."/>
            <person name="Barry K."/>
            <person name="Detter J.C."/>
            <person name="Glavina del Rio T."/>
            <person name="Hammon N."/>
            <person name="Israni S."/>
            <person name="Dalin E."/>
            <person name="Tice H."/>
            <person name="Pitluck S."/>
            <person name="Chain P."/>
            <person name="Malfatti S."/>
            <person name="Shin M."/>
            <person name="Vergez L."/>
            <person name="Schmutz J."/>
            <person name="Larimer F."/>
            <person name="Land M."/>
            <person name="Hauser L."/>
            <person name="Kyrpides N."/>
            <person name="Mikhailova N."/>
            <person name="Romine M.F."/>
            <person name="Fredrickson J."/>
            <person name="Tiedje J."/>
            <person name="Richardson P."/>
        </authorList>
    </citation>
    <scope>NUCLEOTIDE SEQUENCE [LARGE SCALE GENOMIC DNA]</scope>
    <source>
        <strain>CN-32 / ATCC BAA-453</strain>
    </source>
</reference>
<organism>
    <name type="scientific">Shewanella putrefaciens (strain CN-32 / ATCC BAA-453)</name>
    <dbReference type="NCBI Taxonomy" id="319224"/>
    <lineage>
        <taxon>Bacteria</taxon>
        <taxon>Pseudomonadati</taxon>
        <taxon>Pseudomonadota</taxon>
        <taxon>Gammaproteobacteria</taxon>
        <taxon>Alteromonadales</taxon>
        <taxon>Shewanellaceae</taxon>
        <taxon>Shewanella</taxon>
    </lineage>
</organism>
<evidence type="ECO:0000255" key="1">
    <source>
        <dbReference type="HAMAP-Rule" id="MF_00195"/>
    </source>
</evidence>
<evidence type="ECO:0000256" key="2">
    <source>
        <dbReference type="SAM" id="MobiDB-lite"/>
    </source>
</evidence>